<feature type="chain" id="PRO_0000256916" description="Chaperonin GroEL">
    <location>
        <begin position="1"/>
        <end position="545"/>
    </location>
</feature>
<feature type="binding site" evidence="1">
    <location>
        <begin position="30"/>
        <end position="33"/>
    </location>
    <ligand>
        <name>ATP</name>
        <dbReference type="ChEBI" id="CHEBI:30616"/>
    </ligand>
</feature>
<feature type="binding site" evidence="1">
    <location>
        <position position="51"/>
    </location>
    <ligand>
        <name>ATP</name>
        <dbReference type="ChEBI" id="CHEBI:30616"/>
    </ligand>
</feature>
<feature type="binding site" evidence="1">
    <location>
        <begin position="87"/>
        <end position="91"/>
    </location>
    <ligand>
        <name>ATP</name>
        <dbReference type="ChEBI" id="CHEBI:30616"/>
    </ligand>
</feature>
<feature type="binding site" evidence="1">
    <location>
        <position position="415"/>
    </location>
    <ligand>
        <name>ATP</name>
        <dbReference type="ChEBI" id="CHEBI:30616"/>
    </ligand>
</feature>
<feature type="binding site" evidence="1">
    <location>
        <position position="496"/>
    </location>
    <ligand>
        <name>ATP</name>
        <dbReference type="ChEBI" id="CHEBI:30616"/>
    </ligand>
</feature>
<reference key="1">
    <citation type="journal article" date="2005" name="J. Bacteriol.">
        <title>Genomic sequence of an otitis media isolate of nontypeable Haemophilus influenzae: comparative study with H. influenzae serotype d, strain KW20.</title>
        <authorList>
            <person name="Harrison A."/>
            <person name="Dyer D.W."/>
            <person name="Gillaspy A."/>
            <person name="Ray W.C."/>
            <person name="Mungur R."/>
            <person name="Carson M.B."/>
            <person name="Zhong H."/>
            <person name="Gipson J."/>
            <person name="Gipson M."/>
            <person name="Johnson L.S."/>
            <person name="Lewis L."/>
            <person name="Bakaletz L.O."/>
            <person name="Munson R.S. Jr."/>
        </authorList>
    </citation>
    <scope>NUCLEOTIDE SEQUENCE [LARGE SCALE GENOMIC DNA]</scope>
    <source>
        <strain>86-028NP</strain>
    </source>
</reference>
<dbReference type="EC" id="5.6.1.7" evidence="1"/>
<dbReference type="EMBL" id="CP000057">
    <property type="protein sequence ID" value="AAX87592.1"/>
    <property type="molecule type" value="Genomic_DNA"/>
</dbReference>
<dbReference type="RefSeq" id="WP_011272104.1">
    <property type="nucleotide sequence ID" value="NC_007146.2"/>
</dbReference>
<dbReference type="SMR" id="Q4QN05"/>
<dbReference type="KEGG" id="hit:NTHI0669"/>
<dbReference type="HOGENOM" id="CLU_016503_3_0_6"/>
<dbReference type="Proteomes" id="UP000002525">
    <property type="component" value="Chromosome"/>
</dbReference>
<dbReference type="GO" id="GO:0005737">
    <property type="term" value="C:cytoplasm"/>
    <property type="evidence" value="ECO:0007669"/>
    <property type="project" value="UniProtKB-SubCell"/>
</dbReference>
<dbReference type="GO" id="GO:0005524">
    <property type="term" value="F:ATP binding"/>
    <property type="evidence" value="ECO:0007669"/>
    <property type="project" value="UniProtKB-UniRule"/>
</dbReference>
<dbReference type="GO" id="GO:0140662">
    <property type="term" value="F:ATP-dependent protein folding chaperone"/>
    <property type="evidence" value="ECO:0007669"/>
    <property type="project" value="InterPro"/>
</dbReference>
<dbReference type="GO" id="GO:0016853">
    <property type="term" value="F:isomerase activity"/>
    <property type="evidence" value="ECO:0007669"/>
    <property type="project" value="UniProtKB-KW"/>
</dbReference>
<dbReference type="GO" id="GO:0051082">
    <property type="term" value="F:unfolded protein binding"/>
    <property type="evidence" value="ECO:0007669"/>
    <property type="project" value="UniProtKB-UniRule"/>
</dbReference>
<dbReference type="GO" id="GO:0042026">
    <property type="term" value="P:protein refolding"/>
    <property type="evidence" value="ECO:0007669"/>
    <property type="project" value="UniProtKB-UniRule"/>
</dbReference>
<dbReference type="CDD" id="cd03344">
    <property type="entry name" value="GroEL"/>
    <property type="match status" value="1"/>
</dbReference>
<dbReference type="FunFam" id="1.10.560.10:FF:000001">
    <property type="entry name" value="60 kDa chaperonin"/>
    <property type="match status" value="1"/>
</dbReference>
<dbReference type="FunFam" id="3.50.7.10:FF:000001">
    <property type="entry name" value="60 kDa chaperonin"/>
    <property type="match status" value="1"/>
</dbReference>
<dbReference type="Gene3D" id="3.50.7.10">
    <property type="entry name" value="GroEL"/>
    <property type="match status" value="1"/>
</dbReference>
<dbReference type="Gene3D" id="1.10.560.10">
    <property type="entry name" value="GroEL-like equatorial domain"/>
    <property type="match status" value="1"/>
</dbReference>
<dbReference type="Gene3D" id="3.30.260.10">
    <property type="entry name" value="TCP-1-like chaperonin intermediate domain"/>
    <property type="match status" value="1"/>
</dbReference>
<dbReference type="HAMAP" id="MF_00600">
    <property type="entry name" value="CH60"/>
    <property type="match status" value="1"/>
</dbReference>
<dbReference type="InterPro" id="IPR018370">
    <property type="entry name" value="Chaperonin_Cpn60_CS"/>
</dbReference>
<dbReference type="InterPro" id="IPR001844">
    <property type="entry name" value="Cpn60/GroEL"/>
</dbReference>
<dbReference type="InterPro" id="IPR002423">
    <property type="entry name" value="Cpn60/GroEL/TCP-1"/>
</dbReference>
<dbReference type="InterPro" id="IPR027409">
    <property type="entry name" value="GroEL-like_apical_dom_sf"/>
</dbReference>
<dbReference type="InterPro" id="IPR027413">
    <property type="entry name" value="GROEL-like_equatorial_sf"/>
</dbReference>
<dbReference type="InterPro" id="IPR027410">
    <property type="entry name" value="TCP-1-like_intermed_sf"/>
</dbReference>
<dbReference type="NCBIfam" id="TIGR02348">
    <property type="entry name" value="GroEL"/>
    <property type="match status" value="1"/>
</dbReference>
<dbReference type="NCBIfam" id="NF000592">
    <property type="entry name" value="PRK00013.1"/>
    <property type="match status" value="1"/>
</dbReference>
<dbReference type="NCBIfam" id="NF009487">
    <property type="entry name" value="PRK12849.1"/>
    <property type="match status" value="1"/>
</dbReference>
<dbReference type="NCBIfam" id="NF009488">
    <property type="entry name" value="PRK12850.1"/>
    <property type="match status" value="1"/>
</dbReference>
<dbReference type="NCBIfam" id="NF009489">
    <property type="entry name" value="PRK12851.1"/>
    <property type="match status" value="1"/>
</dbReference>
<dbReference type="PANTHER" id="PTHR45633">
    <property type="entry name" value="60 KDA HEAT SHOCK PROTEIN, MITOCHONDRIAL"/>
    <property type="match status" value="1"/>
</dbReference>
<dbReference type="Pfam" id="PF00118">
    <property type="entry name" value="Cpn60_TCP1"/>
    <property type="match status" value="1"/>
</dbReference>
<dbReference type="PRINTS" id="PR00298">
    <property type="entry name" value="CHAPERONIN60"/>
</dbReference>
<dbReference type="SUPFAM" id="SSF52029">
    <property type="entry name" value="GroEL apical domain-like"/>
    <property type="match status" value="1"/>
</dbReference>
<dbReference type="SUPFAM" id="SSF48592">
    <property type="entry name" value="GroEL equatorial domain-like"/>
    <property type="match status" value="1"/>
</dbReference>
<dbReference type="SUPFAM" id="SSF54849">
    <property type="entry name" value="GroEL-intermediate domain like"/>
    <property type="match status" value="1"/>
</dbReference>
<dbReference type="PROSITE" id="PS00296">
    <property type="entry name" value="CHAPERONINS_CPN60"/>
    <property type="match status" value="1"/>
</dbReference>
<organism>
    <name type="scientific">Haemophilus influenzae (strain 86-028NP)</name>
    <dbReference type="NCBI Taxonomy" id="281310"/>
    <lineage>
        <taxon>Bacteria</taxon>
        <taxon>Pseudomonadati</taxon>
        <taxon>Pseudomonadota</taxon>
        <taxon>Gammaproteobacteria</taxon>
        <taxon>Pasteurellales</taxon>
        <taxon>Pasteurellaceae</taxon>
        <taxon>Haemophilus</taxon>
    </lineage>
</organism>
<keyword id="KW-0067">ATP-binding</keyword>
<keyword id="KW-0143">Chaperone</keyword>
<keyword id="KW-0963">Cytoplasm</keyword>
<keyword id="KW-0413">Isomerase</keyword>
<keyword id="KW-0547">Nucleotide-binding</keyword>
<protein>
    <recommendedName>
        <fullName evidence="1">Chaperonin GroEL</fullName>
        <ecNumber evidence="1">5.6.1.7</ecNumber>
    </recommendedName>
    <alternativeName>
        <fullName evidence="1">60 kDa chaperonin</fullName>
    </alternativeName>
    <alternativeName>
        <fullName evidence="1">Chaperonin-60</fullName>
        <shortName evidence="1">Cpn60</shortName>
    </alternativeName>
</protein>
<gene>
    <name evidence="1" type="primary">groEL</name>
    <name evidence="1" type="synonym">groL</name>
    <name type="ordered locus">NTHI0669</name>
</gene>
<proteinExistence type="inferred from homology"/>
<comment type="function">
    <text evidence="1">Together with its co-chaperonin GroES, plays an essential role in assisting protein folding. The GroEL-GroES system forms a nano-cage that allows encapsulation of the non-native substrate proteins and provides a physical environment optimized to promote and accelerate protein folding.</text>
</comment>
<comment type="catalytic activity">
    <reaction evidence="1">
        <text>ATP + H2O + a folded polypeptide = ADP + phosphate + an unfolded polypeptide.</text>
        <dbReference type="EC" id="5.6.1.7"/>
    </reaction>
</comment>
<comment type="subunit">
    <text evidence="1">Forms a cylinder of 14 subunits composed of two heptameric rings stacked back-to-back. Interacts with the co-chaperonin GroES.</text>
</comment>
<comment type="subcellular location">
    <subcellularLocation>
        <location evidence="1">Cytoplasm</location>
    </subcellularLocation>
</comment>
<comment type="similarity">
    <text evidence="1">Belongs to the chaperonin (HSP60) family.</text>
</comment>
<name>CH60_HAEI8</name>
<sequence length="545" mass="57325">MAAKDVKFGNDARVKMLKGVNVLADAVKVTLGPKGRNVILDKSFGAPTITKDGVSVAREIELEDKFENMGAQMVKEVASKANDAAGDGTTTATVLAQAIVNEGLKAVAAGMNPMDLKRGIDKAVSAVVSELKNLSKPCETAKEIEQVGTISANSDSIVGQLISQAMEKVGKEGVITVEDGTGLEDELDVVEGMQFDRGYLSPYFINKPETATVELDNPYLLLVDKKISNIRELLPVLEGVAKAGKPLLIIAEDVEGEALATLVVNTMRGIVKVAAVKAPGFGDRRKAMLQDIAILTAGTVISEEIGMELEKATLEDLGQAKRVVINKDNTTIIDGIGDEAQIKGRVAQIRQQIEESTSDYDKEKLQERVAKLAGGVAVIKVGAATEVEMKEKKDRVDDALHATRAAVEEGIVAGGGVALVRAAAKVAASLKGDNEEQNVGIKLALRAMEAPLRQIVTNSGEEASVVASAVKNGEGNFGYNAGTEQYGDMIEMGILDPTKVTRSALQFAASVAGLMITTECMVTDLPKDDKADLGAAGMGGMGGMM</sequence>
<evidence type="ECO:0000255" key="1">
    <source>
        <dbReference type="HAMAP-Rule" id="MF_00600"/>
    </source>
</evidence>
<accession>Q4QN05</accession>